<gene>
    <name type="primary">azoB</name>
</gene>
<dbReference type="EC" id="1.7.-.-"/>
<dbReference type="EMBL" id="AF466104">
    <property type="protein sequence ID" value="AAM92125.2"/>
    <property type="molecule type" value="Genomic_DNA"/>
</dbReference>
<dbReference type="SMR" id="Q8KU07"/>
<dbReference type="BRENDA" id="1.7.1.6">
    <property type="organism ID" value="7792"/>
</dbReference>
<dbReference type="GO" id="GO:0016491">
    <property type="term" value="F:oxidoreductase activity"/>
    <property type="evidence" value="ECO:0007669"/>
    <property type="project" value="UniProtKB-KW"/>
</dbReference>
<dbReference type="CDD" id="cd05269">
    <property type="entry name" value="TMR_SDR_a"/>
    <property type="match status" value="1"/>
</dbReference>
<dbReference type="Gene3D" id="3.40.50.720">
    <property type="entry name" value="NAD(P)-binding Rossmann-like Domain"/>
    <property type="match status" value="1"/>
</dbReference>
<dbReference type="Gene3D" id="3.90.25.10">
    <property type="entry name" value="UDP-galactose 4-epimerase, domain 1"/>
    <property type="match status" value="1"/>
</dbReference>
<dbReference type="InterPro" id="IPR051604">
    <property type="entry name" value="Ergot_Alk_Oxidoreductase"/>
</dbReference>
<dbReference type="InterPro" id="IPR036291">
    <property type="entry name" value="NAD(P)-bd_dom_sf"/>
</dbReference>
<dbReference type="InterPro" id="IPR008030">
    <property type="entry name" value="NmrA-like"/>
</dbReference>
<dbReference type="PANTHER" id="PTHR43162">
    <property type="match status" value="1"/>
</dbReference>
<dbReference type="PANTHER" id="PTHR43162:SF1">
    <property type="entry name" value="PRESTALK A DIFFERENTIATION PROTEIN A"/>
    <property type="match status" value="1"/>
</dbReference>
<dbReference type="Pfam" id="PF05368">
    <property type="entry name" value="NmrA"/>
    <property type="match status" value="1"/>
</dbReference>
<dbReference type="SUPFAM" id="SSF51735">
    <property type="entry name" value="NAD(P)-binding Rossmann-fold domains"/>
    <property type="match status" value="1"/>
</dbReference>
<protein>
    <recommendedName>
        <fullName>NAD(P)H azoreductase</fullName>
        <ecNumber>1.7.-.-</ecNumber>
    </recommendedName>
</protein>
<reference key="1">
    <citation type="journal article" date="2002" name="Appl. Environ. Microbiol.">
        <title>Molecular cloning and characterization of the gene coding for the aerobic azoreductase from Xenophilus azovorans KF46F.</title>
        <authorList>
            <person name="Bluemel S."/>
            <person name="Knackmuss H.-J."/>
            <person name="Stolz A."/>
        </authorList>
    </citation>
    <scope>NUCLEOTIDE SEQUENCE [GENOMIC DNA]</scope>
    <scope>PROTEIN SEQUENCE OF 1-11; 54-78; 123-136 AND 240-264</scope>
    <scope>SUBUNIT</scope>
    <scope>CHARACTERIZATION</scope>
    <source>
        <strain>KF46F / DSM 13620</strain>
    </source>
</reference>
<feature type="chain" id="PRO_0000234087" description="NAD(P)H azoreductase">
    <location>
        <begin position="1"/>
        <end position="286"/>
    </location>
</feature>
<feature type="binding site" evidence="1">
    <location>
        <begin position="6"/>
        <end position="11"/>
    </location>
    <ligand>
        <name>NADP(+)</name>
        <dbReference type="ChEBI" id="CHEBI:58349"/>
    </ligand>
</feature>
<feature type="binding site" evidence="1">
    <location>
        <position position="31"/>
    </location>
    <ligand>
        <name>NADP(+)</name>
        <dbReference type="ChEBI" id="CHEBI:58349"/>
    </ligand>
</feature>
<feature type="binding site" evidence="1">
    <location>
        <begin position="136"/>
        <end position="141"/>
    </location>
    <ligand>
        <name>NADP(+)</name>
        <dbReference type="ChEBI" id="CHEBI:58349"/>
    </ligand>
</feature>
<organism>
    <name type="scientific">Xenophilus azovorans</name>
    <dbReference type="NCBI Taxonomy" id="151755"/>
    <lineage>
        <taxon>Bacteria</taxon>
        <taxon>Pseudomonadati</taxon>
        <taxon>Pseudomonadota</taxon>
        <taxon>Betaproteobacteria</taxon>
        <taxon>Burkholderiales</taxon>
        <taxon>Comamonadaceae</taxon>
        <taxon>Xenophilus</taxon>
    </lineage>
</organism>
<name>AZOB_XENAZ</name>
<evidence type="ECO:0000250" key="1">
    <source>
        <dbReference type="UniProtKB" id="P39315"/>
    </source>
</evidence>
<evidence type="ECO:0000269" key="2">
    <source>
    </source>
</evidence>
<evidence type="ECO:0000305" key="3"/>
<comment type="function">
    <text>Catalyzes the reductive cleavage of azo bond in aromatic azo compounds to the corresponding amines. Uses preferentially NADPH rather than NADH as an electron donor for its activity. The enzyme reductively cleaved Orange II and carboxy-Orange II, and can also reduce several sulfonated structural analogs, which carry a hydroxy group in the 2 position of the naphthol ring.</text>
</comment>
<comment type="biophysicochemical properties">
    <kinetics>
        <KM>5 uM for NADPH</KM>
        <KM>180 uM for NADH</KM>
    </kinetics>
    <phDependence>
        <text>Optimum pH is 6.2-6.8.</text>
    </phDependence>
    <temperatureDependence>
        <text>Optimum temperature is 41 degrees Celsius.</text>
    </temperatureDependence>
</comment>
<comment type="subunit">
    <text evidence="2">Monomer.</text>
</comment>
<comment type="similarity">
    <text evidence="3">Belongs to the NmrA-type oxidoreductase family. Azoreductase type 3 subfamily.</text>
</comment>
<proteinExistence type="evidence at protein level"/>
<sequence length="286" mass="30082">MILVVGGTGTIGSEVVRLLQEAKLPFKALVRDAAKARELNARGVQTAAGDLREPRTLPAALGGVDKVFVVTPLVPDQVQMRAALITAAKTAGVKHFVMSTGIGAAPDSPVQIGRWLGENQQQVQESGMAWTFVQPGFFMQNLLMYAQAIREKGEFYMPLGEGKVSWIDARDIAAVAVQALTKPGHENQAYPVTGPQALSGAEVAAALSAAAGRPVRYVAITLEQAKQAMTGMGMPESLADAMNELYALAPPDYLAGVLDTVPKVTGRPARTFAEFAKAHAAAFGAA</sequence>
<accession>Q8KU07</accession>
<keyword id="KW-0903">Direct protein sequencing</keyword>
<keyword id="KW-0520">NAD</keyword>
<keyword id="KW-0521">NADP</keyword>
<keyword id="KW-0560">Oxidoreductase</keyword>